<keyword id="KW-0325">Glycoprotein</keyword>
<keyword id="KW-1031">Host cell junction</keyword>
<keyword id="KW-1032">Host cell membrane</keyword>
<keyword id="KW-1039">Host endosome</keyword>
<keyword id="KW-1040">Host Golgi apparatus</keyword>
<keyword id="KW-1043">Host membrane</keyword>
<keyword id="KW-0472">Membrane</keyword>
<keyword id="KW-1185">Reference proteome</keyword>
<keyword id="KW-0812">Transmembrane</keyword>
<keyword id="KW-1133">Transmembrane helix</keyword>
<keyword id="KW-0261">Viral envelope protein</keyword>
<keyword id="KW-0946">Virion</keyword>
<dbReference type="EMBL" id="AF243438">
    <property type="protein sequence ID" value="AAG14270.1"/>
    <property type="molecule type" value="Genomic_DNA"/>
</dbReference>
<dbReference type="RefSeq" id="YP_001034013.1">
    <property type="nucleotide sequence ID" value="NC_002229.3"/>
</dbReference>
<dbReference type="SMR" id="Q77MP7"/>
<dbReference type="GlyCosmos" id="Q77MP7">
    <property type="glycosylation" value="7 sites, No reported glycans"/>
</dbReference>
<dbReference type="GeneID" id="4811455"/>
<dbReference type="KEGG" id="vg:4811455"/>
<dbReference type="Proteomes" id="UP000008072">
    <property type="component" value="Segment"/>
</dbReference>
<dbReference type="GO" id="GO:0044175">
    <property type="term" value="C:host cell endosome membrane"/>
    <property type="evidence" value="ECO:0007669"/>
    <property type="project" value="UniProtKB-SubCell"/>
</dbReference>
<dbReference type="GO" id="GO:0044178">
    <property type="term" value="C:host cell Golgi membrane"/>
    <property type="evidence" value="ECO:0007669"/>
    <property type="project" value="UniProtKB-SubCell"/>
</dbReference>
<dbReference type="GO" id="GO:0044156">
    <property type="term" value="C:host cell junction"/>
    <property type="evidence" value="ECO:0007669"/>
    <property type="project" value="UniProtKB-SubCell"/>
</dbReference>
<dbReference type="GO" id="GO:0016020">
    <property type="term" value="C:membrane"/>
    <property type="evidence" value="ECO:0007669"/>
    <property type="project" value="UniProtKB-KW"/>
</dbReference>
<dbReference type="GO" id="GO:0019031">
    <property type="term" value="C:viral envelope"/>
    <property type="evidence" value="ECO:0007669"/>
    <property type="project" value="UniProtKB-KW"/>
</dbReference>
<dbReference type="GO" id="GO:0055036">
    <property type="term" value="C:virion membrane"/>
    <property type="evidence" value="ECO:0007669"/>
    <property type="project" value="UniProtKB-SubCell"/>
</dbReference>
<dbReference type="Gene3D" id="2.60.40.10">
    <property type="entry name" value="Immunoglobulins"/>
    <property type="match status" value="1"/>
</dbReference>
<dbReference type="InterPro" id="IPR046463">
    <property type="entry name" value="Herpes_gE_N"/>
</dbReference>
<dbReference type="InterPro" id="IPR003404">
    <property type="entry name" value="Herpes_glycopE_Fc"/>
</dbReference>
<dbReference type="InterPro" id="IPR036179">
    <property type="entry name" value="Ig-like_dom_sf"/>
</dbReference>
<dbReference type="InterPro" id="IPR013783">
    <property type="entry name" value="Ig-like_fold"/>
</dbReference>
<dbReference type="Pfam" id="PF02480">
    <property type="entry name" value="Herpes_gE"/>
    <property type="match status" value="1"/>
</dbReference>
<dbReference type="Pfam" id="PF20418">
    <property type="entry name" value="Herpes_gE_N"/>
    <property type="match status" value="1"/>
</dbReference>
<dbReference type="SUPFAM" id="SSF48726">
    <property type="entry name" value="Immunoglobulin"/>
    <property type="match status" value="1"/>
</dbReference>
<name>GE_GAHVM</name>
<gene>
    <name type="primary">MDV096</name>
</gene>
<accession>Q77MP7</accession>
<proteinExistence type="inferred from homology"/>
<reference key="1">
    <citation type="journal article" date="2000" name="J. Virol.">
        <title>The genome of a very virulent Marek's disease virus.</title>
        <authorList>
            <person name="Tulman E.R."/>
            <person name="Afonso C.L."/>
            <person name="Lu Z."/>
            <person name="Zsak L."/>
            <person name="Rock D.L."/>
            <person name="Kutish G.F."/>
        </authorList>
    </citation>
    <scope>NUCLEOTIDE SEQUENCE [LARGE SCALE GENOMIC DNA]</scope>
</reference>
<protein>
    <recommendedName>
        <fullName>Envelope glycoprotein E</fullName>
        <shortName>gE</shortName>
    </recommendedName>
</protein>
<sequence length="497" mass="55676">MCVFQILIIVTTIKVAGTANINHIDVPAGHSATTTIPRYPPVVDGTLYTETWTWIPNHCNETATGYVCLESAHCFTDLILGVSCMRYADEIVLRTDKFIVDAGSIKQIESLSLNGVPNIFLSTKASNKLEILNASLQNAGIYIRYSRNGTRTAKLDVVVVGVLGQARDRLPQMSSPMISSHADIKLSLKNFKALVYHVGDTINVSTAVILGPSPEIFTLEFRVLFLRYNPTCKFVTIYEPCIFHPKEPECITTAEQSVCHFASNIDILQIAAARSENCSTGYRRCIYDTAIDESVQARLTFIEPGIPSFKMKDVQVDDAGLYVVVALYNGRPSAWTYIYLSTVETYLNVYENYHKPGFGYKSFLQNSSIVDENEASDWSSSSIKRRNNGTIIYDILLTSLSIGAIIIVIVGGVCIAILIRRRRRRRTRGLFDEYPKYMTLPGNDLGGMNVPYDNTCSGNQVEYYQEKSAKMKRMGSGYTAWLKNDMPKIRKRLDLYH</sequence>
<feature type="chain" id="PRO_0000406532" description="Envelope glycoprotein E">
    <location>
        <begin position="1"/>
        <end position="497"/>
    </location>
</feature>
<feature type="topological domain" description="Virion surface" evidence="2">
    <location>
        <begin position="1"/>
        <end position="398"/>
    </location>
</feature>
<feature type="transmembrane region" description="Helical" evidence="2">
    <location>
        <begin position="399"/>
        <end position="419"/>
    </location>
</feature>
<feature type="topological domain" description="Intravirion" evidence="2">
    <location>
        <begin position="420"/>
        <end position="497"/>
    </location>
</feature>
<feature type="glycosylation site" description="N-linked (GlcNAc...) asparagine; by host" evidence="2">
    <location>
        <position position="60"/>
    </location>
</feature>
<feature type="glycosylation site" description="N-linked (GlcNAc...) asparagine; by host" evidence="2">
    <location>
        <position position="133"/>
    </location>
</feature>
<feature type="glycosylation site" description="N-linked (GlcNAc...) asparagine; by host" evidence="2">
    <location>
        <position position="148"/>
    </location>
</feature>
<feature type="glycosylation site" description="N-linked (GlcNAc...) asparagine; by host" evidence="2">
    <location>
        <position position="203"/>
    </location>
</feature>
<feature type="glycosylation site" description="N-linked (GlcNAc...) asparagine; by host" evidence="2">
    <location>
        <position position="277"/>
    </location>
</feature>
<feature type="glycosylation site" description="N-linked (GlcNAc...) asparagine; by host" evidence="2">
    <location>
        <position position="366"/>
    </location>
</feature>
<feature type="glycosylation site" description="N-linked (GlcNAc...) asparagine; by host" evidence="2">
    <location>
        <position position="388"/>
    </location>
</feature>
<comment type="function">
    <text evidence="1">In epithelial cells, the heterodimer gE/gI is required for the cell-to-cell spread of the virus, by sorting nascent virions to cell junctions. Once the virus reaches the cell junctions, virus particles can spread to adjacent cells extremely rapidly through interactions with cellular receptors that accumulate at these junctions. Implicated in basolateral spread in polarized cells. In neuronal cells, gE/gI is essential for the anterograde spread of the infection throughout the host nervous system. Together with US9, the heterodimer gE/gI is involved in the sorting and transport of viral structural components toward axon tips (By similarity).</text>
</comment>
<comment type="subunit">
    <text evidence="1">Interacts with gI.</text>
</comment>
<comment type="subcellular location">
    <subcellularLocation>
        <location evidence="1">Virion membrane</location>
        <topology evidence="1">Single-pass type I membrane protein</topology>
    </subcellularLocation>
    <subcellularLocation>
        <location evidence="1">Host cell membrane</location>
        <topology evidence="1">Single-pass type I membrane protein</topology>
    </subcellularLocation>
    <subcellularLocation>
        <location evidence="1">Host cell junction</location>
    </subcellularLocation>
    <subcellularLocation>
        <location evidence="1">Host Golgi apparatus membrane</location>
        <topology evidence="1">Single-pass membrane protein</topology>
    </subcellularLocation>
    <subcellularLocation>
        <location evidence="1">Host endosome membrane</location>
        <topology evidence="1">Single-pass membrane protein</topology>
    </subcellularLocation>
    <text evidence="1">During virion morphogenesis, this protein probably accumulates in the endosomes and trans-Golgi where secondary envelopment occurs. It is probably transported to the cell surface from where it is endocytosed and directed to the trans-Golgi network (TGN), maybe through an interaction with PACS-1 sorting protein. The heterodimer gE/gI then redistributes to cell junctions to promote cell-cell spread later in the infection (By similarity).</text>
</comment>
<comment type="PTM">
    <text evidence="3">Phosphorylated within the acidic cluster. Phosphorylation determines whether endocytosed viral gE traffics to the trans-Golgi network or recycles to the cell membrane.</text>
</comment>
<comment type="similarity">
    <text evidence="3">Belongs to the alphaherpesvirinae glycoprotein E family.</text>
</comment>
<evidence type="ECO:0000250" key="1"/>
<evidence type="ECO:0000255" key="2"/>
<evidence type="ECO:0000305" key="3"/>
<organismHost>
    <name type="scientific">Gallus gallus</name>
    <name type="common">Chicken</name>
    <dbReference type="NCBI Taxonomy" id="9031"/>
</organismHost>
<organism>
    <name type="scientific">Gallid herpesvirus 2 (strain Chicken/Md5/ATCC VR-987)</name>
    <name type="common">GaHV-2</name>
    <name type="synonym">Marek's disease herpesvirus type 1</name>
    <dbReference type="NCBI Taxonomy" id="10389"/>
    <lineage>
        <taxon>Viruses</taxon>
        <taxon>Duplodnaviria</taxon>
        <taxon>Heunggongvirae</taxon>
        <taxon>Peploviricota</taxon>
        <taxon>Herviviricetes</taxon>
        <taxon>Herpesvirales</taxon>
        <taxon>Orthoherpesviridae</taxon>
        <taxon>Alphaherpesvirinae</taxon>
        <taxon>Mardivirus</taxon>
        <taxon>Mardivirus gallidalpha2</taxon>
        <taxon>Gallid alphaherpesvirus 2</taxon>
    </lineage>
</organism>